<organism>
    <name type="scientific">Caulobacter vibrioides (strain NA1000 / CB15N)</name>
    <name type="common">Caulobacter crescentus</name>
    <dbReference type="NCBI Taxonomy" id="565050"/>
    <lineage>
        <taxon>Bacteria</taxon>
        <taxon>Pseudomonadati</taxon>
        <taxon>Pseudomonadota</taxon>
        <taxon>Alphaproteobacteria</taxon>
        <taxon>Caulobacterales</taxon>
        <taxon>Caulobacteraceae</taxon>
        <taxon>Caulobacter</taxon>
    </lineage>
</organism>
<accession>B8GWL9</accession>
<proteinExistence type="inferred from homology"/>
<dbReference type="EC" id="6.1.1.1" evidence="1"/>
<dbReference type="EMBL" id="CP001340">
    <property type="protein sequence ID" value="ACL95411.2"/>
    <property type="status" value="ALT_INIT"/>
    <property type="molecule type" value="Genomic_DNA"/>
</dbReference>
<dbReference type="RefSeq" id="YP_002517319.4">
    <property type="nucleotide sequence ID" value="NC_011916.1"/>
</dbReference>
<dbReference type="SMR" id="B8GWL9"/>
<dbReference type="GeneID" id="7330086"/>
<dbReference type="KEGG" id="ccs:CCNA_01946"/>
<dbReference type="PATRIC" id="fig|565050.3.peg.1906"/>
<dbReference type="HOGENOM" id="CLU_024003_0_3_5"/>
<dbReference type="OrthoDB" id="9804243at2"/>
<dbReference type="PhylomeDB" id="B8GWL9"/>
<dbReference type="Proteomes" id="UP000001364">
    <property type="component" value="Chromosome"/>
</dbReference>
<dbReference type="GO" id="GO:0005829">
    <property type="term" value="C:cytosol"/>
    <property type="evidence" value="ECO:0007669"/>
    <property type="project" value="TreeGrafter"/>
</dbReference>
<dbReference type="GO" id="GO:0005524">
    <property type="term" value="F:ATP binding"/>
    <property type="evidence" value="ECO:0007669"/>
    <property type="project" value="UniProtKB-UniRule"/>
</dbReference>
<dbReference type="GO" id="GO:0003723">
    <property type="term" value="F:RNA binding"/>
    <property type="evidence" value="ECO:0007669"/>
    <property type="project" value="UniProtKB-KW"/>
</dbReference>
<dbReference type="GO" id="GO:0004831">
    <property type="term" value="F:tyrosine-tRNA ligase activity"/>
    <property type="evidence" value="ECO:0007669"/>
    <property type="project" value="UniProtKB-UniRule"/>
</dbReference>
<dbReference type="GO" id="GO:0006437">
    <property type="term" value="P:tyrosyl-tRNA aminoacylation"/>
    <property type="evidence" value="ECO:0007669"/>
    <property type="project" value="UniProtKB-UniRule"/>
</dbReference>
<dbReference type="CDD" id="cd00165">
    <property type="entry name" value="S4"/>
    <property type="match status" value="1"/>
</dbReference>
<dbReference type="CDD" id="cd00805">
    <property type="entry name" value="TyrRS_core"/>
    <property type="match status" value="1"/>
</dbReference>
<dbReference type="FunFam" id="1.10.240.10:FF:000001">
    <property type="entry name" value="Tyrosine--tRNA ligase"/>
    <property type="match status" value="1"/>
</dbReference>
<dbReference type="Gene3D" id="3.40.50.620">
    <property type="entry name" value="HUPs"/>
    <property type="match status" value="1"/>
</dbReference>
<dbReference type="Gene3D" id="3.10.290.10">
    <property type="entry name" value="RNA-binding S4 domain"/>
    <property type="match status" value="1"/>
</dbReference>
<dbReference type="Gene3D" id="1.10.240.10">
    <property type="entry name" value="Tyrosyl-Transfer RNA Synthetase"/>
    <property type="match status" value="1"/>
</dbReference>
<dbReference type="HAMAP" id="MF_02006">
    <property type="entry name" value="Tyr_tRNA_synth_type1"/>
    <property type="match status" value="1"/>
</dbReference>
<dbReference type="InterPro" id="IPR002305">
    <property type="entry name" value="aa-tRNA-synth_Ic"/>
</dbReference>
<dbReference type="InterPro" id="IPR014729">
    <property type="entry name" value="Rossmann-like_a/b/a_fold"/>
</dbReference>
<dbReference type="InterPro" id="IPR036986">
    <property type="entry name" value="S4_RNA-bd_sf"/>
</dbReference>
<dbReference type="InterPro" id="IPR002307">
    <property type="entry name" value="Tyr-tRNA-ligase"/>
</dbReference>
<dbReference type="InterPro" id="IPR024088">
    <property type="entry name" value="Tyr-tRNA-ligase_bac-type"/>
</dbReference>
<dbReference type="InterPro" id="IPR024107">
    <property type="entry name" value="Tyr-tRNA-ligase_bac_1"/>
</dbReference>
<dbReference type="NCBIfam" id="TIGR00234">
    <property type="entry name" value="tyrS"/>
    <property type="match status" value="1"/>
</dbReference>
<dbReference type="PANTHER" id="PTHR11766:SF0">
    <property type="entry name" value="TYROSINE--TRNA LIGASE, MITOCHONDRIAL"/>
    <property type="match status" value="1"/>
</dbReference>
<dbReference type="PANTHER" id="PTHR11766">
    <property type="entry name" value="TYROSYL-TRNA SYNTHETASE"/>
    <property type="match status" value="1"/>
</dbReference>
<dbReference type="Pfam" id="PF00579">
    <property type="entry name" value="tRNA-synt_1b"/>
    <property type="match status" value="1"/>
</dbReference>
<dbReference type="PRINTS" id="PR01040">
    <property type="entry name" value="TRNASYNTHTYR"/>
</dbReference>
<dbReference type="SUPFAM" id="SSF55174">
    <property type="entry name" value="Alpha-L RNA-binding motif"/>
    <property type="match status" value="1"/>
</dbReference>
<dbReference type="SUPFAM" id="SSF52374">
    <property type="entry name" value="Nucleotidylyl transferase"/>
    <property type="match status" value="1"/>
</dbReference>
<dbReference type="PROSITE" id="PS50889">
    <property type="entry name" value="S4"/>
    <property type="match status" value="1"/>
</dbReference>
<sequence>MSAASSFKSEFLRTLEARGYIHQITHADELDTAAQGGPIVAYIGFDATAPSLHVGSLIQIMLLRRLQQAGHKPIVLMGGGTTKVGDPTGKDESRKLLSDADIQANIAGIKTVFSKFLTFGDGPTDAIMVDNDVWLSKFGYVQFLREYGVHFTVNRMLAFDSVKLRLEREQPMTFLEFNYMLMQAVDFLELNRAHGCVLQMGGSDQWGNILNGVELTRRVDQKSAFGLTTPLLATASGAKMGKTAAGAVWLNAEQLSPYDYWQFWRNTEDADVGRFLKLFTDLPLDRIAELEALEGAQINEAKKVLADEATRMAHGEEEARKARDAAEKAFEQGALSADLPTYEIAAADLDAGVVLAALFADAGLAGSRGEARRLAQGGGLKVNDKAEADANRLITAADLVEGVVKLAAGKKKIVLVKPV</sequence>
<reference key="1">
    <citation type="journal article" date="2010" name="J. Bacteriol.">
        <title>The genetic basis of laboratory adaptation in Caulobacter crescentus.</title>
        <authorList>
            <person name="Marks M.E."/>
            <person name="Castro-Rojas C.M."/>
            <person name="Teiling C."/>
            <person name="Du L."/>
            <person name="Kapatral V."/>
            <person name="Walunas T.L."/>
            <person name="Crosson S."/>
        </authorList>
    </citation>
    <scope>NUCLEOTIDE SEQUENCE [LARGE SCALE GENOMIC DNA]</scope>
    <source>
        <strain>NA1000 / CB15N</strain>
    </source>
</reference>
<comment type="function">
    <text evidence="1">Catalyzes the attachment of tyrosine to tRNA(Tyr) in a two-step reaction: tyrosine is first activated by ATP to form Tyr-AMP and then transferred to the acceptor end of tRNA(Tyr).</text>
</comment>
<comment type="catalytic activity">
    <reaction evidence="1">
        <text>tRNA(Tyr) + L-tyrosine + ATP = L-tyrosyl-tRNA(Tyr) + AMP + diphosphate + H(+)</text>
        <dbReference type="Rhea" id="RHEA:10220"/>
        <dbReference type="Rhea" id="RHEA-COMP:9706"/>
        <dbReference type="Rhea" id="RHEA-COMP:9707"/>
        <dbReference type="ChEBI" id="CHEBI:15378"/>
        <dbReference type="ChEBI" id="CHEBI:30616"/>
        <dbReference type="ChEBI" id="CHEBI:33019"/>
        <dbReference type="ChEBI" id="CHEBI:58315"/>
        <dbReference type="ChEBI" id="CHEBI:78442"/>
        <dbReference type="ChEBI" id="CHEBI:78536"/>
        <dbReference type="ChEBI" id="CHEBI:456215"/>
        <dbReference type="EC" id="6.1.1.1"/>
    </reaction>
</comment>
<comment type="subunit">
    <text evidence="1">Homodimer.</text>
</comment>
<comment type="subcellular location">
    <subcellularLocation>
        <location evidence="1">Cytoplasm</location>
    </subcellularLocation>
</comment>
<comment type="similarity">
    <text evidence="1">Belongs to the class-I aminoacyl-tRNA synthetase family. TyrS type 1 subfamily.</text>
</comment>
<comment type="sequence caution" evidence="2">
    <conflict type="erroneous initiation">
        <sequence resource="EMBL-CDS" id="ACL95411"/>
    </conflict>
    <text>Extended N-terminus.</text>
</comment>
<name>SYY_CAUVN</name>
<protein>
    <recommendedName>
        <fullName evidence="1">Tyrosine--tRNA ligase</fullName>
        <ecNumber evidence="1">6.1.1.1</ecNumber>
    </recommendedName>
    <alternativeName>
        <fullName evidence="1">Tyrosyl-tRNA synthetase</fullName>
        <shortName evidence="1">TyrRS</shortName>
    </alternativeName>
</protein>
<keyword id="KW-0030">Aminoacyl-tRNA synthetase</keyword>
<keyword id="KW-0067">ATP-binding</keyword>
<keyword id="KW-0963">Cytoplasm</keyword>
<keyword id="KW-0436">Ligase</keyword>
<keyword id="KW-0547">Nucleotide-binding</keyword>
<keyword id="KW-0648">Protein biosynthesis</keyword>
<keyword id="KW-1185">Reference proteome</keyword>
<keyword id="KW-0694">RNA-binding</keyword>
<feature type="chain" id="PRO_1000189268" description="Tyrosine--tRNA ligase">
    <location>
        <begin position="1"/>
        <end position="419"/>
    </location>
</feature>
<feature type="domain" description="S4 RNA-binding" evidence="1">
    <location>
        <begin position="353"/>
        <end position="418"/>
    </location>
</feature>
<feature type="short sequence motif" description="'HIGH' region">
    <location>
        <begin position="47"/>
        <end position="56"/>
    </location>
</feature>
<feature type="short sequence motif" description="'KMSKS' region">
    <location>
        <begin position="239"/>
        <end position="243"/>
    </location>
</feature>
<feature type="binding site" evidence="1">
    <location>
        <position position="42"/>
    </location>
    <ligand>
        <name>L-tyrosine</name>
        <dbReference type="ChEBI" id="CHEBI:58315"/>
    </ligand>
</feature>
<feature type="binding site" evidence="1">
    <location>
        <position position="179"/>
    </location>
    <ligand>
        <name>L-tyrosine</name>
        <dbReference type="ChEBI" id="CHEBI:58315"/>
    </ligand>
</feature>
<feature type="binding site" evidence="1">
    <location>
        <position position="183"/>
    </location>
    <ligand>
        <name>L-tyrosine</name>
        <dbReference type="ChEBI" id="CHEBI:58315"/>
    </ligand>
</feature>
<feature type="binding site" evidence="1">
    <location>
        <position position="242"/>
    </location>
    <ligand>
        <name>ATP</name>
        <dbReference type="ChEBI" id="CHEBI:30616"/>
    </ligand>
</feature>
<evidence type="ECO:0000255" key="1">
    <source>
        <dbReference type="HAMAP-Rule" id="MF_02006"/>
    </source>
</evidence>
<evidence type="ECO:0000305" key="2"/>
<gene>
    <name evidence="1" type="primary">tyrS</name>
    <name type="ordered locus">CCNA_01946</name>
</gene>